<proteinExistence type="evidence at protein level"/>
<name>KC1D_RABIT</name>
<gene>
    <name type="primary">CSNK1D</name>
    <name type="synonym">HCKID</name>
</gene>
<keyword id="KW-0067">ATP-binding</keyword>
<keyword id="KW-0963">Cytoplasm</keyword>
<keyword id="KW-0903">Direct protein sequencing</keyword>
<keyword id="KW-0418">Kinase</keyword>
<keyword id="KW-0547">Nucleotide-binding</keyword>
<keyword id="KW-0539">Nucleus</keyword>
<keyword id="KW-0597">Phosphoprotein</keyword>
<keyword id="KW-1185">Reference proteome</keyword>
<keyword id="KW-0723">Serine/threonine-protein kinase</keyword>
<keyword id="KW-0808">Transferase</keyword>
<keyword id="KW-0879">Wnt signaling pathway</keyword>
<comment type="function">
    <text evidence="2 4">Essential serine/threonine-protein kinase that regulates diverse cellular growth and survival processes including Wnt signaling, DNA repair and circadian rhythms. It can phosphorylate a large number of proteins. Casein kinases are operationally defined by their preferential utilization of acidic proteins such as caseins as substrates. Phosphorylates connexin-43/GJA1, MAP1A, SNAPIN, MAPT/TAU, TOP2A, DCK, HIF1A, EIF6, p53/TP53, DVL2, DVL3, ESR1, AIB1/NCOA3, DNMT1, PKD2, YAP1, PER1 and PER2. Central component of the circadian clock. In balance with PP1, determines the circadian period length through the regulation of the speed and rhythmicity of PER1 and PER2 phosphorylation. Controls PER1 and PER2 nuclear transport and degradation. YAP1 phosphorylation promotes its SCF(beta-TRCP) E3 ubiquitin ligase-mediated ubiquitination and subsequent degradation. DNMT1 phosphorylation reduces its DNA-binding activity. Phosphorylation of ESR1 and AIB1/NCOA3 stimulates their activity and coactivation. Phosphorylation of DVL2 and DVL3 regulates WNT3A signaling pathway that controls neurite outgrowth. Phosphorylates NEDD9/HEF1 (By similarity). EIF6 phosphorylation promotes its nuclear export. Triggers down-regulation of dopamine receptors in the forebrain. Activates DCK in vitro by phosphorylation. TOP2A phosphorylation favors DNA cleavable complex formation. May regulate the formation of the mitotic spindle apparatus in extravillous trophoblast. Modulates connexin-43/GJA1 gap junction assembly by phosphorylation. Probably involved in lymphocyte physiology. Regulates fast synaptic transmission mediated by glutamate (By similarity). Interacts with DDX3X; this interaction enhances CSNK1D kinase activity in vitro, but it is unclear whether this interaction is physiologically relevant (By similarity).</text>
</comment>
<comment type="catalytic activity">
    <reaction evidence="2">
        <text>L-seryl-[protein] + ATP = O-phospho-L-seryl-[protein] + ADP + H(+)</text>
        <dbReference type="Rhea" id="RHEA:17989"/>
        <dbReference type="Rhea" id="RHEA-COMP:9863"/>
        <dbReference type="Rhea" id="RHEA-COMP:11604"/>
        <dbReference type="ChEBI" id="CHEBI:15378"/>
        <dbReference type="ChEBI" id="CHEBI:29999"/>
        <dbReference type="ChEBI" id="CHEBI:30616"/>
        <dbReference type="ChEBI" id="CHEBI:83421"/>
        <dbReference type="ChEBI" id="CHEBI:456216"/>
        <dbReference type="EC" id="2.7.11.1"/>
    </reaction>
    <physiologicalReaction direction="left-to-right" evidence="2">
        <dbReference type="Rhea" id="RHEA:17990"/>
    </physiologicalReaction>
</comment>
<comment type="catalytic activity">
    <reaction evidence="2">
        <text>L-threonyl-[protein] + ATP = O-phospho-L-threonyl-[protein] + ADP + H(+)</text>
        <dbReference type="Rhea" id="RHEA:46608"/>
        <dbReference type="Rhea" id="RHEA-COMP:11060"/>
        <dbReference type="Rhea" id="RHEA-COMP:11605"/>
        <dbReference type="ChEBI" id="CHEBI:15378"/>
        <dbReference type="ChEBI" id="CHEBI:30013"/>
        <dbReference type="ChEBI" id="CHEBI:30616"/>
        <dbReference type="ChEBI" id="CHEBI:61977"/>
        <dbReference type="ChEBI" id="CHEBI:456216"/>
        <dbReference type="EC" id="2.7.11.1"/>
    </reaction>
    <physiologicalReaction direction="left-to-right" evidence="2">
        <dbReference type="Rhea" id="RHEA:46609"/>
    </physiologicalReaction>
</comment>
<comment type="catalytic activity">
    <reaction evidence="2">
        <text>L-seryl-[tau protein] + ATP = O-phospho-L-seryl-[tau protein] + ADP + H(+)</text>
        <dbReference type="Rhea" id="RHEA:12801"/>
        <dbReference type="Rhea" id="RHEA-COMP:13701"/>
        <dbReference type="Rhea" id="RHEA-COMP:13702"/>
        <dbReference type="ChEBI" id="CHEBI:15378"/>
        <dbReference type="ChEBI" id="CHEBI:29999"/>
        <dbReference type="ChEBI" id="CHEBI:30616"/>
        <dbReference type="ChEBI" id="CHEBI:83421"/>
        <dbReference type="ChEBI" id="CHEBI:456216"/>
        <dbReference type="EC" id="2.7.11.26"/>
    </reaction>
    <physiologicalReaction direction="left-to-right" evidence="2">
        <dbReference type="Rhea" id="RHEA:12802"/>
    </physiologicalReaction>
</comment>
<comment type="catalytic activity">
    <reaction evidence="2">
        <text>L-threonyl-[tau protein] + ATP = O-phospho-L-threonyl-[tau protein] + ADP + H(+)</text>
        <dbReference type="Rhea" id="RHEA:53904"/>
        <dbReference type="Rhea" id="RHEA-COMP:13703"/>
        <dbReference type="Rhea" id="RHEA-COMP:13704"/>
        <dbReference type="ChEBI" id="CHEBI:15378"/>
        <dbReference type="ChEBI" id="CHEBI:30013"/>
        <dbReference type="ChEBI" id="CHEBI:30616"/>
        <dbReference type="ChEBI" id="CHEBI:61977"/>
        <dbReference type="ChEBI" id="CHEBI:456216"/>
        <dbReference type="EC" id="2.7.11.26"/>
    </reaction>
    <physiologicalReaction direction="left-to-right" evidence="2">
        <dbReference type="Rhea" id="RHEA:53905"/>
    </physiologicalReaction>
</comment>
<comment type="activity regulation">
    <text evidence="2">Exhibits substrate-dependent heparin activation.</text>
</comment>
<comment type="subunit">
    <text evidence="2 3 4">Monomer (By similarity). Component of the circadian core oscillator, which includes the CRY proteins, CLOCK, or NPAS2, ARTNL/BMAL1 or ARTNL2/BMAL2, CSNK1D and/or CSNK1E, TIMELESS and the PER proteins (By similarity). Interacts with DNMT1 and MAP1A (By similarity). Interacts directly with PER1 and PER2 which may lead to their degradation (By similarity). Interacts with MAPT/TAU, SNAPIN, DBNDD2, AIB1/NCOA3 and ESR1 (By similarity). Interacts with AKAP9/AKAP450; this interaction promotes centrosomal subcellular location (By similarity). Binds to tubulins in mitotic cells upon DNA damage (By similarity). Interacts with GJA1 (By similarity). Interacts with FAM83A, FAM83B, FAM83E and FAM83H (via DUF1669) (By similarity).</text>
</comment>
<comment type="subcellular location">
    <subcellularLocation>
        <location>Cytoplasm</location>
    </subcellularLocation>
    <subcellularLocation>
        <location evidence="1">Nucleus</location>
    </subcellularLocation>
</comment>
<comment type="PTM">
    <text evidence="1">Autophosphorylated on serine and threonine residues; this autophosphorylation represses activity. Reactivated by phosphatase-mediated dephosphorylation. May be dephosphorylated by PP1 (By similarity).</text>
</comment>
<comment type="similarity">
    <text evidence="6">Belongs to the protein kinase superfamily. CK1 Ser/Thr protein kinase family. Casein kinase I subfamily.</text>
</comment>
<reference key="1">
    <citation type="journal article" date="1992" name="Proc. Natl. Acad. Sci. U.S.A.">
        <title>Yeast casein kinase I homologues: an essential gene pair.</title>
        <authorList>
            <person name="Robinson L.C."/>
            <person name="Hubbard E.J.A."/>
            <person name="Graves P.R."/>
            <person name="dePaoli-Roach A.A."/>
            <person name="Roach P.J."/>
            <person name="Kung C."/>
            <person name="Haas D.W."/>
            <person name="Hagedorn C.H."/>
            <person name="Goebl M."/>
            <person name="Culbertson M.R."/>
            <person name="Carlson M."/>
        </authorList>
    </citation>
    <scope>NUCLEOTIDE SEQUENCE OF 5-81</scope>
    <scope>PARTIAL PROTEIN SEQUENCE</scope>
    <source>
        <tissue>Reticulocyte</tissue>
        <tissue>Testis</tissue>
    </source>
</reference>
<accession>P81123</accession>
<sequence length="81" mass="9405">XIFPDNFLMGLGKKGNLVYIIDFGLAKKYRDARTHQHIPYRENKNLTGTARYASINTHLGIEQSRRDDLESLGYVLMYFNL</sequence>
<feature type="chain" id="PRO_0000192835" description="Casein kinase I isoform delta">
    <location>
        <begin position="1" status="less than"/>
        <end position="81" status="greater than"/>
    </location>
</feature>
<feature type="domain" description="Protein kinase" evidence="5">
    <location>
        <begin position="1" status="less than"/>
        <end position="81" status="greater than"/>
    </location>
</feature>
<feature type="sequence conflict" description="In Ref. 1; AA sequence." evidence="6" ref="1">
    <original>L</original>
    <variation>I</variation>
    <location>
        <position position="11"/>
    </location>
</feature>
<feature type="sequence conflict" description="In Ref. 1; AA sequence." evidence="6" ref="1">
    <original>N</original>
    <variation>D</variation>
    <location>
        <position position="43"/>
    </location>
</feature>
<feature type="sequence conflict" description="In Ref. 1; AA sequence." evidence="6" ref="1">
    <original>T</original>
    <variation>A</variation>
    <location>
        <position position="57"/>
    </location>
</feature>
<feature type="non-terminal residue">
    <location>
        <position position="1"/>
    </location>
</feature>
<feature type="non-terminal residue">
    <location>
        <position position="81"/>
    </location>
</feature>
<organism>
    <name type="scientific">Oryctolagus cuniculus</name>
    <name type="common">Rabbit</name>
    <dbReference type="NCBI Taxonomy" id="9986"/>
    <lineage>
        <taxon>Eukaryota</taxon>
        <taxon>Metazoa</taxon>
        <taxon>Chordata</taxon>
        <taxon>Craniata</taxon>
        <taxon>Vertebrata</taxon>
        <taxon>Euteleostomi</taxon>
        <taxon>Mammalia</taxon>
        <taxon>Eutheria</taxon>
        <taxon>Euarchontoglires</taxon>
        <taxon>Glires</taxon>
        <taxon>Lagomorpha</taxon>
        <taxon>Leporidae</taxon>
        <taxon>Oryctolagus</taxon>
    </lineage>
</organism>
<evidence type="ECO:0000250" key="1"/>
<evidence type="ECO:0000250" key="2">
    <source>
        <dbReference type="UniProtKB" id="P48730"/>
    </source>
</evidence>
<evidence type="ECO:0000250" key="3">
    <source>
        <dbReference type="UniProtKB" id="Q06486"/>
    </source>
</evidence>
<evidence type="ECO:0000250" key="4">
    <source>
        <dbReference type="UniProtKB" id="Q9DC28"/>
    </source>
</evidence>
<evidence type="ECO:0000255" key="5">
    <source>
        <dbReference type="PROSITE-ProRule" id="PRU00159"/>
    </source>
</evidence>
<evidence type="ECO:0000305" key="6"/>
<protein>
    <recommendedName>
        <fullName>Casein kinase I isoform delta</fullName>
        <shortName>CKI-delta</shortName>
        <shortName>CKId</shortName>
        <ecNumber evidence="2">2.7.11.1</ecNumber>
    </recommendedName>
    <alternativeName>
        <fullName>Tau-protein kinase CSNK1D</fullName>
        <ecNumber evidence="2">2.7.11.26</ecNumber>
    </alternativeName>
</protein>
<dbReference type="EC" id="2.7.11.1" evidence="2"/>
<dbReference type="EC" id="2.7.11.26" evidence="2"/>
<dbReference type="ChEMBL" id="CHEMBL3309063"/>
<dbReference type="PaxDb" id="9986-ENSOCUP00000006410"/>
<dbReference type="eggNOG" id="KOG1164">
    <property type="taxonomic scope" value="Eukaryota"/>
</dbReference>
<dbReference type="InParanoid" id="P81123"/>
<dbReference type="Proteomes" id="UP000001811">
    <property type="component" value="Unplaced"/>
</dbReference>
<dbReference type="GO" id="GO:0005737">
    <property type="term" value="C:cytoplasm"/>
    <property type="evidence" value="ECO:0007669"/>
    <property type="project" value="UniProtKB-SubCell"/>
</dbReference>
<dbReference type="GO" id="GO:0005634">
    <property type="term" value="C:nucleus"/>
    <property type="evidence" value="ECO:0000250"/>
    <property type="project" value="UniProtKB"/>
</dbReference>
<dbReference type="GO" id="GO:0005524">
    <property type="term" value="F:ATP binding"/>
    <property type="evidence" value="ECO:0007669"/>
    <property type="project" value="UniProtKB-KW"/>
</dbReference>
<dbReference type="GO" id="GO:0004672">
    <property type="term" value="F:protein kinase activity"/>
    <property type="evidence" value="ECO:0000250"/>
    <property type="project" value="UniProtKB"/>
</dbReference>
<dbReference type="GO" id="GO:0106310">
    <property type="term" value="F:protein serine kinase activity"/>
    <property type="evidence" value="ECO:0007669"/>
    <property type="project" value="RHEA"/>
</dbReference>
<dbReference type="GO" id="GO:0004674">
    <property type="term" value="F:protein serine/threonine kinase activity"/>
    <property type="evidence" value="ECO:0007669"/>
    <property type="project" value="UniProtKB-KW"/>
</dbReference>
<dbReference type="GO" id="GO:0032922">
    <property type="term" value="P:circadian regulation of gene expression"/>
    <property type="evidence" value="ECO:0000250"/>
    <property type="project" value="UniProtKB"/>
</dbReference>
<dbReference type="GO" id="GO:0032436">
    <property type="term" value="P:positive regulation of proteasomal ubiquitin-dependent protein catabolic process"/>
    <property type="evidence" value="ECO:0000250"/>
    <property type="project" value="UniProtKB"/>
</dbReference>
<dbReference type="GO" id="GO:0006468">
    <property type="term" value="P:protein phosphorylation"/>
    <property type="evidence" value="ECO:0000250"/>
    <property type="project" value="UniProtKB"/>
</dbReference>
<dbReference type="GO" id="GO:0042752">
    <property type="term" value="P:regulation of circadian rhythm"/>
    <property type="evidence" value="ECO:0000250"/>
    <property type="project" value="UniProtKB"/>
</dbReference>
<dbReference type="GO" id="GO:0016055">
    <property type="term" value="P:Wnt signaling pathway"/>
    <property type="evidence" value="ECO:0007669"/>
    <property type="project" value="UniProtKB-KW"/>
</dbReference>
<dbReference type="Gene3D" id="1.10.510.10">
    <property type="entry name" value="Transferase(Phosphotransferase) domain 1"/>
    <property type="match status" value="1"/>
</dbReference>
<dbReference type="InterPro" id="IPR050235">
    <property type="entry name" value="CK1_Ser-Thr_kinase"/>
</dbReference>
<dbReference type="InterPro" id="IPR011009">
    <property type="entry name" value="Kinase-like_dom_sf"/>
</dbReference>
<dbReference type="InterPro" id="IPR040976">
    <property type="entry name" value="Pkinase_fungal"/>
</dbReference>
<dbReference type="InterPro" id="IPR000719">
    <property type="entry name" value="Prot_kinase_dom"/>
</dbReference>
<dbReference type="PANTHER" id="PTHR11909">
    <property type="entry name" value="CASEIN KINASE-RELATED"/>
    <property type="match status" value="1"/>
</dbReference>
<dbReference type="Pfam" id="PF17667">
    <property type="entry name" value="Pkinase_fungal"/>
    <property type="match status" value="1"/>
</dbReference>
<dbReference type="SUPFAM" id="SSF56112">
    <property type="entry name" value="Protein kinase-like (PK-like)"/>
    <property type="match status" value="1"/>
</dbReference>
<dbReference type="PROSITE" id="PS50011">
    <property type="entry name" value="PROTEIN_KINASE_DOM"/>
    <property type="match status" value="1"/>
</dbReference>